<feature type="chain" id="PRO_0000228164" description="Translation initiation factor IF-2">
    <location>
        <begin position="1"/>
        <end position="686"/>
    </location>
</feature>
<feature type="domain" description="tr-type G">
    <location>
        <begin position="188"/>
        <end position="357"/>
    </location>
</feature>
<feature type="region of interest" description="Disordered" evidence="3">
    <location>
        <begin position="54"/>
        <end position="105"/>
    </location>
</feature>
<feature type="region of interest" description="G1" evidence="1">
    <location>
        <begin position="197"/>
        <end position="204"/>
    </location>
</feature>
<feature type="region of interest" description="G2" evidence="1">
    <location>
        <begin position="222"/>
        <end position="226"/>
    </location>
</feature>
<feature type="region of interest" description="G3" evidence="1">
    <location>
        <begin position="243"/>
        <end position="246"/>
    </location>
</feature>
<feature type="region of interest" description="G4" evidence="1">
    <location>
        <begin position="297"/>
        <end position="300"/>
    </location>
</feature>
<feature type="region of interest" description="G5" evidence="1">
    <location>
        <begin position="333"/>
        <end position="335"/>
    </location>
</feature>
<feature type="compositionally biased region" description="Basic residues" evidence="3">
    <location>
        <begin position="69"/>
        <end position="81"/>
    </location>
</feature>
<feature type="binding site" evidence="2">
    <location>
        <begin position="197"/>
        <end position="204"/>
    </location>
    <ligand>
        <name>GTP</name>
        <dbReference type="ChEBI" id="CHEBI:37565"/>
    </ligand>
</feature>
<feature type="binding site" evidence="2">
    <location>
        <begin position="243"/>
        <end position="247"/>
    </location>
    <ligand>
        <name>GTP</name>
        <dbReference type="ChEBI" id="CHEBI:37565"/>
    </ligand>
</feature>
<feature type="binding site" evidence="2">
    <location>
        <begin position="297"/>
        <end position="300"/>
    </location>
    <ligand>
        <name>GTP</name>
        <dbReference type="ChEBI" id="CHEBI:37565"/>
    </ligand>
</feature>
<organism>
    <name type="scientific">Bacillus cereus (strain ZK / E33L)</name>
    <dbReference type="NCBI Taxonomy" id="288681"/>
    <lineage>
        <taxon>Bacteria</taxon>
        <taxon>Bacillati</taxon>
        <taxon>Bacillota</taxon>
        <taxon>Bacilli</taxon>
        <taxon>Bacillales</taxon>
        <taxon>Bacillaceae</taxon>
        <taxon>Bacillus</taxon>
        <taxon>Bacillus cereus group</taxon>
    </lineage>
</organism>
<comment type="function">
    <text evidence="2">One of the essential components for the initiation of protein synthesis. Protects formylmethionyl-tRNA from spontaneous hydrolysis and promotes its binding to the 30S ribosomal subunits. Also involved in the hydrolysis of GTP during the formation of the 70S ribosomal complex.</text>
</comment>
<comment type="subcellular location">
    <subcellularLocation>
        <location evidence="2">Cytoplasm</location>
    </subcellularLocation>
</comment>
<comment type="similarity">
    <text evidence="2">Belongs to the TRAFAC class translation factor GTPase superfamily. Classic translation factor GTPase family. IF-2 subfamily.</text>
</comment>
<keyword id="KW-0963">Cytoplasm</keyword>
<keyword id="KW-0342">GTP-binding</keyword>
<keyword id="KW-0396">Initiation factor</keyword>
<keyword id="KW-0547">Nucleotide-binding</keyword>
<keyword id="KW-0648">Protein biosynthesis</keyword>
<proteinExistence type="inferred from homology"/>
<evidence type="ECO:0000250" key="1"/>
<evidence type="ECO:0000255" key="2">
    <source>
        <dbReference type="HAMAP-Rule" id="MF_00100"/>
    </source>
</evidence>
<evidence type="ECO:0000256" key="3">
    <source>
        <dbReference type="SAM" id="MobiDB-lite"/>
    </source>
</evidence>
<sequence>MSKIRVHEYAKKHNISSKDLMTKLKEMNIEVSNHMTMLDDEVVNKLDNEYQAEKPSVADEFEVEEKVVRSKKNSNKKKKKGKGNEDKRQENFAGRQQTQTVETPDKITFSGSLTVGDLAKKLSKEPSEIIKKLFMLGIMATINQDLDKDTIELIANDYGIEVEEEVIVSETEFETFIDEQDDEENLKERPAVVTIMGHVDHGKTTLLDSIRNSKVTAGEAGGITQHIGAYQVEVNDKKITFLDTPGHAAFTTMRARGAQVTDITILVVAADDGVMPQTVEAINHAKAAGVPIIVAVNKMDKPAANPDRVMQELTEYELVPEAWGGDTIFVPISAIQGEGIDNLLEMILLVSEVEEYKANPNRYATGTVIEAQLDKGKGTIATLLVQNGTLRVGDPIVVGTSFGRVRAMVSDIGRRVKVAGPSTPVEITGLNEVPQAGDRFMAFADEKKARQIGESRAQEALLAQRGEKSKLSLEDLFQQIQEGDVKEINLIVKADVQGSVEAMAASLRKIDVEGVKVKIIHTGVGAITESDIILASASNAIVIGFNVRPDVNAKRTAELENVDIRLHRIIYKVIEEIEAAMQGMLDPEFEEKVIGQAEVRQTFKVTKVGTIAGCYVTDGKITRDSGVRIIRDGVVIFEGQLDTLKRFKDDVKEVAQNYECGITIERYNDLKEGDIIEAYIMEEVKR</sequence>
<dbReference type="EMBL" id="CP000001">
    <property type="protein sequence ID" value="AAU16695.1"/>
    <property type="molecule type" value="Genomic_DNA"/>
</dbReference>
<dbReference type="RefSeq" id="WP_000036341.1">
    <property type="nucleotide sequence ID" value="NZ_CP009968.1"/>
</dbReference>
<dbReference type="SMR" id="Q636L3"/>
<dbReference type="KEGG" id="bcz:BCE33L3572"/>
<dbReference type="PATRIC" id="fig|288681.22.peg.1839"/>
<dbReference type="Proteomes" id="UP000002612">
    <property type="component" value="Chromosome"/>
</dbReference>
<dbReference type="GO" id="GO:0005829">
    <property type="term" value="C:cytosol"/>
    <property type="evidence" value="ECO:0007669"/>
    <property type="project" value="TreeGrafter"/>
</dbReference>
<dbReference type="GO" id="GO:0005525">
    <property type="term" value="F:GTP binding"/>
    <property type="evidence" value="ECO:0007669"/>
    <property type="project" value="UniProtKB-KW"/>
</dbReference>
<dbReference type="GO" id="GO:0003924">
    <property type="term" value="F:GTPase activity"/>
    <property type="evidence" value="ECO:0007669"/>
    <property type="project" value="UniProtKB-UniRule"/>
</dbReference>
<dbReference type="GO" id="GO:0003743">
    <property type="term" value="F:translation initiation factor activity"/>
    <property type="evidence" value="ECO:0007669"/>
    <property type="project" value="UniProtKB-UniRule"/>
</dbReference>
<dbReference type="CDD" id="cd01887">
    <property type="entry name" value="IF2_eIF5B"/>
    <property type="match status" value="1"/>
</dbReference>
<dbReference type="CDD" id="cd03702">
    <property type="entry name" value="IF2_mtIF2_II"/>
    <property type="match status" value="1"/>
</dbReference>
<dbReference type="CDD" id="cd03692">
    <property type="entry name" value="mtIF2_IVc"/>
    <property type="match status" value="1"/>
</dbReference>
<dbReference type="FunFam" id="1.10.10.2480:FF:000001">
    <property type="entry name" value="Translation initiation factor IF-2"/>
    <property type="match status" value="1"/>
</dbReference>
<dbReference type="FunFam" id="2.40.30.10:FF:000007">
    <property type="entry name" value="Translation initiation factor IF-2"/>
    <property type="match status" value="1"/>
</dbReference>
<dbReference type="FunFam" id="2.40.30.10:FF:000008">
    <property type="entry name" value="Translation initiation factor IF-2"/>
    <property type="match status" value="1"/>
</dbReference>
<dbReference type="FunFam" id="3.40.50.10050:FF:000001">
    <property type="entry name" value="Translation initiation factor IF-2"/>
    <property type="match status" value="1"/>
</dbReference>
<dbReference type="FunFam" id="3.40.50.300:FF:000019">
    <property type="entry name" value="Translation initiation factor IF-2"/>
    <property type="match status" value="1"/>
</dbReference>
<dbReference type="Gene3D" id="1.10.10.2480">
    <property type="match status" value="1"/>
</dbReference>
<dbReference type="Gene3D" id="3.40.50.300">
    <property type="entry name" value="P-loop containing nucleotide triphosphate hydrolases"/>
    <property type="match status" value="1"/>
</dbReference>
<dbReference type="Gene3D" id="2.40.30.10">
    <property type="entry name" value="Translation factors"/>
    <property type="match status" value="2"/>
</dbReference>
<dbReference type="Gene3D" id="3.40.50.10050">
    <property type="entry name" value="Translation initiation factor IF- 2, domain 3"/>
    <property type="match status" value="1"/>
</dbReference>
<dbReference type="HAMAP" id="MF_00100_B">
    <property type="entry name" value="IF_2_B"/>
    <property type="match status" value="1"/>
</dbReference>
<dbReference type="InterPro" id="IPR053905">
    <property type="entry name" value="EF-G-like_DII"/>
</dbReference>
<dbReference type="InterPro" id="IPR044145">
    <property type="entry name" value="IF2_II"/>
</dbReference>
<dbReference type="InterPro" id="IPR006847">
    <property type="entry name" value="IF2_N"/>
</dbReference>
<dbReference type="InterPro" id="IPR027417">
    <property type="entry name" value="P-loop_NTPase"/>
</dbReference>
<dbReference type="InterPro" id="IPR005225">
    <property type="entry name" value="Small_GTP-bd"/>
</dbReference>
<dbReference type="InterPro" id="IPR000795">
    <property type="entry name" value="T_Tr_GTP-bd_dom"/>
</dbReference>
<dbReference type="InterPro" id="IPR000178">
    <property type="entry name" value="TF_IF2_bacterial-like"/>
</dbReference>
<dbReference type="InterPro" id="IPR015760">
    <property type="entry name" value="TIF_IF2"/>
</dbReference>
<dbReference type="InterPro" id="IPR023115">
    <property type="entry name" value="TIF_IF2_dom3"/>
</dbReference>
<dbReference type="InterPro" id="IPR036925">
    <property type="entry name" value="TIF_IF2_dom3_sf"/>
</dbReference>
<dbReference type="InterPro" id="IPR009000">
    <property type="entry name" value="Transl_B-barrel_sf"/>
</dbReference>
<dbReference type="NCBIfam" id="TIGR00487">
    <property type="entry name" value="IF-2"/>
    <property type="match status" value="1"/>
</dbReference>
<dbReference type="NCBIfam" id="TIGR00231">
    <property type="entry name" value="small_GTP"/>
    <property type="match status" value="1"/>
</dbReference>
<dbReference type="PANTHER" id="PTHR43381:SF5">
    <property type="entry name" value="TR-TYPE G DOMAIN-CONTAINING PROTEIN"/>
    <property type="match status" value="1"/>
</dbReference>
<dbReference type="PANTHER" id="PTHR43381">
    <property type="entry name" value="TRANSLATION INITIATION FACTOR IF-2-RELATED"/>
    <property type="match status" value="1"/>
</dbReference>
<dbReference type="Pfam" id="PF22042">
    <property type="entry name" value="EF-G_D2"/>
    <property type="match status" value="1"/>
</dbReference>
<dbReference type="Pfam" id="PF00009">
    <property type="entry name" value="GTP_EFTU"/>
    <property type="match status" value="1"/>
</dbReference>
<dbReference type="Pfam" id="PF11987">
    <property type="entry name" value="IF-2"/>
    <property type="match status" value="1"/>
</dbReference>
<dbReference type="Pfam" id="PF04760">
    <property type="entry name" value="IF2_N"/>
    <property type="match status" value="2"/>
</dbReference>
<dbReference type="SUPFAM" id="SSF52156">
    <property type="entry name" value="Initiation factor IF2/eIF5b, domain 3"/>
    <property type="match status" value="1"/>
</dbReference>
<dbReference type="SUPFAM" id="SSF52540">
    <property type="entry name" value="P-loop containing nucleoside triphosphate hydrolases"/>
    <property type="match status" value="1"/>
</dbReference>
<dbReference type="SUPFAM" id="SSF50447">
    <property type="entry name" value="Translation proteins"/>
    <property type="match status" value="2"/>
</dbReference>
<dbReference type="PROSITE" id="PS51722">
    <property type="entry name" value="G_TR_2"/>
    <property type="match status" value="1"/>
</dbReference>
<dbReference type="PROSITE" id="PS01176">
    <property type="entry name" value="IF2"/>
    <property type="match status" value="1"/>
</dbReference>
<protein>
    <recommendedName>
        <fullName evidence="2">Translation initiation factor IF-2</fullName>
    </recommendedName>
</protein>
<accession>Q636L3</accession>
<gene>
    <name evidence="2" type="primary">infB</name>
    <name type="ordered locus">BCE33L3572</name>
</gene>
<reference key="1">
    <citation type="journal article" date="2006" name="J. Bacteriol.">
        <title>Pathogenomic sequence analysis of Bacillus cereus and Bacillus thuringiensis isolates closely related to Bacillus anthracis.</title>
        <authorList>
            <person name="Han C.S."/>
            <person name="Xie G."/>
            <person name="Challacombe J.F."/>
            <person name="Altherr M.R."/>
            <person name="Bhotika S.S."/>
            <person name="Bruce D."/>
            <person name="Campbell C.S."/>
            <person name="Campbell M.L."/>
            <person name="Chen J."/>
            <person name="Chertkov O."/>
            <person name="Cleland C."/>
            <person name="Dimitrijevic M."/>
            <person name="Doggett N.A."/>
            <person name="Fawcett J.J."/>
            <person name="Glavina T."/>
            <person name="Goodwin L.A."/>
            <person name="Hill K.K."/>
            <person name="Hitchcock P."/>
            <person name="Jackson P.J."/>
            <person name="Keim P."/>
            <person name="Kewalramani A.R."/>
            <person name="Longmire J."/>
            <person name="Lucas S."/>
            <person name="Malfatti S."/>
            <person name="McMurry K."/>
            <person name="Meincke L.J."/>
            <person name="Misra M."/>
            <person name="Moseman B.L."/>
            <person name="Mundt M."/>
            <person name="Munk A.C."/>
            <person name="Okinaka R.T."/>
            <person name="Parson-Quintana B."/>
            <person name="Reilly L.P."/>
            <person name="Richardson P."/>
            <person name="Robinson D.L."/>
            <person name="Rubin E."/>
            <person name="Saunders E."/>
            <person name="Tapia R."/>
            <person name="Tesmer J.G."/>
            <person name="Thayer N."/>
            <person name="Thompson L.S."/>
            <person name="Tice H."/>
            <person name="Ticknor L.O."/>
            <person name="Wills P.L."/>
            <person name="Brettin T.S."/>
            <person name="Gilna P."/>
        </authorList>
    </citation>
    <scope>NUCLEOTIDE SEQUENCE [LARGE SCALE GENOMIC DNA]</scope>
    <source>
        <strain>ZK / E33L</strain>
    </source>
</reference>
<name>IF2_BACCZ</name>